<keyword id="KW-0030">Aminoacyl-tRNA synthetase</keyword>
<keyword id="KW-0067">ATP-binding</keyword>
<keyword id="KW-0963">Cytoplasm</keyword>
<keyword id="KW-0436">Ligase</keyword>
<keyword id="KW-0547">Nucleotide-binding</keyword>
<keyword id="KW-0648">Protein biosynthesis</keyword>
<comment type="catalytic activity">
    <reaction evidence="1">
        <text>tRNA(Leu) + L-leucine + ATP = L-leucyl-tRNA(Leu) + AMP + diphosphate</text>
        <dbReference type="Rhea" id="RHEA:11688"/>
        <dbReference type="Rhea" id="RHEA-COMP:9613"/>
        <dbReference type="Rhea" id="RHEA-COMP:9622"/>
        <dbReference type="ChEBI" id="CHEBI:30616"/>
        <dbReference type="ChEBI" id="CHEBI:33019"/>
        <dbReference type="ChEBI" id="CHEBI:57427"/>
        <dbReference type="ChEBI" id="CHEBI:78442"/>
        <dbReference type="ChEBI" id="CHEBI:78494"/>
        <dbReference type="ChEBI" id="CHEBI:456215"/>
        <dbReference type="EC" id="6.1.1.4"/>
    </reaction>
</comment>
<comment type="subcellular location">
    <subcellularLocation>
        <location evidence="1">Cytoplasm</location>
    </subcellularLocation>
</comment>
<comment type="similarity">
    <text evidence="1">Belongs to the class-I aminoacyl-tRNA synthetase family.</text>
</comment>
<gene>
    <name evidence="1" type="primary">leuS</name>
    <name type="ordered locus">NMC0326</name>
</gene>
<feature type="chain" id="PRO_1000009377" description="Leucine--tRNA ligase">
    <location>
        <begin position="1"/>
        <end position="876"/>
    </location>
</feature>
<feature type="short sequence motif" description="'HIGH' region">
    <location>
        <begin position="42"/>
        <end position="52"/>
    </location>
</feature>
<feature type="short sequence motif" description="'KMSKS' region">
    <location>
        <begin position="634"/>
        <end position="638"/>
    </location>
</feature>
<feature type="binding site" evidence="1">
    <location>
        <position position="637"/>
    </location>
    <ligand>
        <name>ATP</name>
        <dbReference type="ChEBI" id="CHEBI:30616"/>
    </ligand>
</feature>
<accession>A1KS07</accession>
<protein>
    <recommendedName>
        <fullName evidence="1">Leucine--tRNA ligase</fullName>
        <ecNumber evidence="1">6.1.1.4</ecNumber>
    </recommendedName>
    <alternativeName>
        <fullName evidence="1">Leucyl-tRNA synthetase</fullName>
        <shortName evidence="1">LeuRS</shortName>
    </alternativeName>
</protein>
<proteinExistence type="inferred from homology"/>
<reference key="1">
    <citation type="journal article" date="2007" name="PLoS Genet.">
        <title>Meningococcal genetic variation mechanisms viewed through comparative analysis of serogroup C strain FAM18.</title>
        <authorList>
            <person name="Bentley S.D."/>
            <person name="Vernikos G.S."/>
            <person name="Snyder L.A.S."/>
            <person name="Churcher C."/>
            <person name="Arrowsmith C."/>
            <person name="Chillingworth T."/>
            <person name="Cronin A."/>
            <person name="Davis P.H."/>
            <person name="Holroyd N.E."/>
            <person name="Jagels K."/>
            <person name="Maddison M."/>
            <person name="Moule S."/>
            <person name="Rabbinowitsch E."/>
            <person name="Sharp S."/>
            <person name="Unwin L."/>
            <person name="Whitehead S."/>
            <person name="Quail M.A."/>
            <person name="Achtman M."/>
            <person name="Barrell B.G."/>
            <person name="Saunders N.J."/>
            <person name="Parkhill J."/>
        </authorList>
    </citation>
    <scope>NUCLEOTIDE SEQUENCE [LARGE SCALE GENOMIC DNA]</scope>
    <source>
        <strain>ATCC 700532 / DSM 15464 / FAM18</strain>
    </source>
</reference>
<dbReference type="EC" id="6.1.1.4" evidence="1"/>
<dbReference type="EMBL" id="AM421808">
    <property type="protein sequence ID" value="CAM09636.1"/>
    <property type="molecule type" value="Genomic_DNA"/>
</dbReference>
<dbReference type="RefSeq" id="WP_002248137.1">
    <property type="nucleotide sequence ID" value="NC_008767.1"/>
</dbReference>
<dbReference type="SMR" id="A1KS07"/>
<dbReference type="KEGG" id="nmc:NMC0326"/>
<dbReference type="HOGENOM" id="CLU_004427_0_0_4"/>
<dbReference type="Proteomes" id="UP000002286">
    <property type="component" value="Chromosome"/>
</dbReference>
<dbReference type="GO" id="GO:0005829">
    <property type="term" value="C:cytosol"/>
    <property type="evidence" value="ECO:0007669"/>
    <property type="project" value="TreeGrafter"/>
</dbReference>
<dbReference type="GO" id="GO:0002161">
    <property type="term" value="F:aminoacyl-tRNA deacylase activity"/>
    <property type="evidence" value="ECO:0007669"/>
    <property type="project" value="InterPro"/>
</dbReference>
<dbReference type="GO" id="GO:0005524">
    <property type="term" value="F:ATP binding"/>
    <property type="evidence" value="ECO:0007669"/>
    <property type="project" value="UniProtKB-UniRule"/>
</dbReference>
<dbReference type="GO" id="GO:0004823">
    <property type="term" value="F:leucine-tRNA ligase activity"/>
    <property type="evidence" value="ECO:0007669"/>
    <property type="project" value="UniProtKB-UniRule"/>
</dbReference>
<dbReference type="GO" id="GO:0006429">
    <property type="term" value="P:leucyl-tRNA aminoacylation"/>
    <property type="evidence" value="ECO:0007669"/>
    <property type="project" value="UniProtKB-UniRule"/>
</dbReference>
<dbReference type="CDD" id="cd07958">
    <property type="entry name" value="Anticodon_Ia_Leu_BEm"/>
    <property type="match status" value="1"/>
</dbReference>
<dbReference type="CDD" id="cd00812">
    <property type="entry name" value="LeuRS_core"/>
    <property type="match status" value="1"/>
</dbReference>
<dbReference type="FunFam" id="1.10.730.10:FF:000003">
    <property type="entry name" value="Leucine--tRNA ligase"/>
    <property type="match status" value="1"/>
</dbReference>
<dbReference type="FunFam" id="2.20.28.290:FF:000001">
    <property type="entry name" value="Leucine--tRNA ligase"/>
    <property type="match status" value="1"/>
</dbReference>
<dbReference type="FunFam" id="3.10.20.590:FF:000001">
    <property type="entry name" value="Leucine--tRNA ligase"/>
    <property type="match status" value="1"/>
</dbReference>
<dbReference type="FunFam" id="3.40.50.620:FF:000003">
    <property type="entry name" value="Leucine--tRNA ligase"/>
    <property type="match status" value="1"/>
</dbReference>
<dbReference type="FunFam" id="3.40.50.620:FF:000124">
    <property type="entry name" value="Leucine--tRNA ligase"/>
    <property type="match status" value="1"/>
</dbReference>
<dbReference type="FunFam" id="3.90.740.10:FF:000012">
    <property type="entry name" value="Leucine--tRNA ligase"/>
    <property type="match status" value="1"/>
</dbReference>
<dbReference type="Gene3D" id="2.20.28.290">
    <property type="match status" value="1"/>
</dbReference>
<dbReference type="Gene3D" id="3.10.20.590">
    <property type="match status" value="1"/>
</dbReference>
<dbReference type="Gene3D" id="3.40.50.620">
    <property type="entry name" value="HUPs"/>
    <property type="match status" value="2"/>
</dbReference>
<dbReference type="Gene3D" id="1.10.730.10">
    <property type="entry name" value="Isoleucyl-tRNA Synthetase, Domain 1"/>
    <property type="match status" value="1"/>
</dbReference>
<dbReference type="Gene3D" id="3.90.740.10">
    <property type="entry name" value="Valyl/Leucyl/Isoleucyl-tRNA synthetase, editing domain"/>
    <property type="match status" value="1"/>
</dbReference>
<dbReference type="HAMAP" id="MF_00049_B">
    <property type="entry name" value="Leu_tRNA_synth_B"/>
    <property type="match status" value="1"/>
</dbReference>
<dbReference type="InterPro" id="IPR001412">
    <property type="entry name" value="aa-tRNA-synth_I_CS"/>
</dbReference>
<dbReference type="InterPro" id="IPR002300">
    <property type="entry name" value="aa-tRNA-synth_Ia"/>
</dbReference>
<dbReference type="InterPro" id="IPR002302">
    <property type="entry name" value="Leu-tRNA-ligase"/>
</dbReference>
<dbReference type="InterPro" id="IPR025709">
    <property type="entry name" value="Leu_tRNA-synth_edit"/>
</dbReference>
<dbReference type="InterPro" id="IPR013155">
    <property type="entry name" value="M/V/L/I-tRNA-synth_anticd-bd"/>
</dbReference>
<dbReference type="InterPro" id="IPR015413">
    <property type="entry name" value="Methionyl/Leucyl_tRNA_Synth"/>
</dbReference>
<dbReference type="InterPro" id="IPR014729">
    <property type="entry name" value="Rossmann-like_a/b/a_fold"/>
</dbReference>
<dbReference type="InterPro" id="IPR009080">
    <property type="entry name" value="tRNAsynth_Ia_anticodon-bd"/>
</dbReference>
<dbReference type="InterPro" id="IPR009008">
    <property type="entry name" value="Val/Leu/Ile-tRNA-synth_edit"/>
</dbReference>
<dbReference type="NCBIfam" id="TIGR00396">
    <property type="entry name" value="leuS_bact"/>
    <property type="match status" value="1"/>
</dbReference>
<dbReference type="PANTHER" id="PTHR43740:SF2">
    <property type="entry name" value="LEUCINE--TRNA LIGASE, MITOCHONDRIAL"/>
    <property type="match status" value="1"/>
</dbReference>
<dbReference type="PANTHER" id="PTHR43740">
    <property type="entry name" value="LEUCYL-TRNA SYNTHETASE"/>
    <property type="match status" value="1"/>
</dbReference>
<dbReference type="Pfam" id="PF08264">
    <property type="entry name" value="Anticodon_1"/>
    <property type="match status" value="1"/>
</dbReference>
<dbReference type="Pfam" id="PF00133">
    <property type="entry name" value="tRNA-synt_1"/>
    <property type="match status" value="2"/>
</dbReference>
<dbReference type="Pfam" id="PF13603">
    <property type="entry name" value="tRNA-synt_1_2"/>
    <property type="match status" value="1"/>
</dbReference>
<dbReference type="Pfam" id="PF09334">
    <property type="entry name" value="tRNA-synt_1g"/>
    <property type="match status" value="1"/>
</dbReference>
<dbReference type="PRINTS" id="PR00985">
    <property type="entry name" value="TRNASYNTHLEU"/>
</dbReference>
<dbReference type="SUPFAM" id="SSF47323">
    <property type="entry name" value="Anticodon-binding domain of a subclass of class I aminoacyl-tRNA synthetases"/>
    <property type="match status" value="1"/>
</dbReference>
<dbReference type="SUPFAM" id="SSF52374">
    <property type="entry name" value="Nucleotidylyl transferase"/>
    <property type="match status" value="1"/>
</dbReference>
<dbReference type="SUPFAM" id="SSF50677">
    <property type="entry name" value="ValRS/IleRS/LeuRS editing domain"/>
    <property type="match status" value="1"/>
</dbReference>
<dbReference type="PROSITE" id="PS00178">
    <property type="entry name" value="AA_TRNA_LIGASE_I"/>
    <property type="match status" value="1"/>
</dbReference>
<sequence>MQEHYQPAAIEPAAQKKWDDARIFNVSEDASKPKYYCLSMFPYPSGKLHMGHVRNYTIGDVLSRFKLLNGFNVMQPMGWDAFGMPAENAAMKNNVAPAAWTYDNIEYMKTQLKSLGFAIDWARETATCKPEYYRWEQWLFTKLFEKGIVYRKNGTVNWDPVDQTVLANEQVIDGRGWRSGALIEKREIPMYYFKITDYAEELLNDLDKLEHWPEQVKTMQRNWIGKSRGMTVRFAVSDDSKQGLEGDYAKLLQVYTTRPDTLMGATYVAVAAEHPLAAAAAADKPELQAFIAECKAGSVAEADMATMEKKGVPTGRYVVNPLNGDKLEVWIANYVLWGYGDGAVMAVPAHDERDFEFAAKYNLPKKQVIAVGDNAFDANRWQEWYADKENGVLVNSGDLDGLDFQTAFDAVAAKLQSQGAGEPKTQYRLRDWGISRQRYWGCPIPIVHCEQCGDVPVPADQLPVVLPENVVPDGMGSPLAKMPEFYETACPCCGGAAKRETDTMDTFMESSWYFFRYMSPKFSDGMVDPAAAKYWGAVDQYIGGIEHAILHLLYARFFTKLMRDEGLVNVDEPFERLLTQGMVVCETYYRENDKGGKDWINPADVELTFDDKGRPISAVLKADGLPVVISGTEKMSKSKNNGVDPQELINAYGADTARLFMMFAAPPEQSLEWSDSGVEGAHRFLRRLWRTVYEYLKQGEAVKAFAGSQDGLSKELKDLRHKLHATTAKVSDDYGRRQQFNTAIAAVMELLNQYDKTDTGGEQGRAVAQEVLETAVRLLWPIVPHICETLWSELNGAKLWEAGWPTVDEAALVKSEIEVMVQVNGKLRGKITVAADASKADLEAAALATEGAVKFMEGKPAKKIIVVPGRLVNIVV</sequence>
<evidence type="ECO:0000255" key="1">
    <source>
        <dbReference type="HAMAP-Rule" id="MF_00049"/>
    </source>
</evidence>
<name>SYL_NEIMF</name>
<organism>
    <name type="scientific">Neisseria meningitidis serogroup C / serotype 2a (strain ATCC 700532 / DSM 15464 / FAM18)</name>
    <dbReference type="NCBI Taxonomy" id="272831"/>
    <lineage>
        <taxon>Bacteria</taxon>
        <taxon>Pseudomonadati</taxon>
        <taxon>Pseudomonadota</taxon>
        <taxon>Betaproteobacteria</taxon>
        <taxon>Neisseriales</taxon>
        <taxon>Neisseriaceae</taxon>
        <taxon>Neisseria</taxon>
    </lineage>
</organism>